<name>YDCR_ECOLI</name>
<protein>
    <recommendedName>
        <fullName>Uncharacterized HTH-type transcriptional regulator YdcR</fullName>
    </recommendedName>
</protein>
<reference key="1">
    <citation type="journal article" date="1996" name="DNA Res.">
        <title>A 570-kb DNA sequence of the Escherichia coli K-12 genome corresponding to the 28.0-40.1 min region on the linkage map.</title>
        <authorList>
            <person name="Aiba H."/>
            <person name="Baba T."/>
            <person name="Fujita K."/>
            <person name="Hayashi K."/>
            <person name="Inada T."/>
            <person name="Isono K."/>
            <person name="Itoh T."/>
            <person name="Kasai H."/>
            <person name="Kashimoto K."/>
            <person name="Kimura S."/>
            <person name="Kitakawa M."/>
            <person name="Kitagawa M."/>
            <person name="Makino K."/>
            <person name="Miki T."/>
            <person name="Mizobuchi K."/>
            <person name="Mori H."/>
            <person name="Mori T."/>
            <person name="Motomura K."/>
            <person name="Nakade S."/>
            <person name="Nakamura Y."/>
            <person name="Nashimoto H."/>
            <person name="Nishio Y."/>
            <person name="Oshima T."/>
            <person name="Saito N."/>
            <person name="Sampei G."/>
            <person name="Seki Y."/>
            <person name="Sivasundaram S."/>
            <person name="Tagami H."/>
            <person name="Takeda J."/>
            <person name="Takemoto K."/>
            <person name="Takeuchi Y."/>
            <person name="Wada C."/>
            <person name="Yamamoto Y."/>
            <person name="Horiuchi T."/>
        </authorList>
    </citation>
    <scope>NUCLEOTIDE SEQUENCE [LARGE SCALE GENOMIC DNA]</scope>
    <source>
        <strain>K12 / W3110 / ATCC 27325 / DSM 5911</strain>
    </source>
</reference>
<reference key="2">
    <citation type="journal article" date="1997" name="Science">
        <title>The complete genome sequence of Escherichia coli K-12.</title>
        <authorList>
            <person name="Blattner F.R."/>
            <person name="Plunkett G. III"/>
            <person name="Bloch C.A."/>
            <person name="Perna N.T."/>
            <person name="Burland V."/>
            <person name="Riley M."/>
            <person name="Collado-Vides J."/>
            <person name="Glasner J.D."/>
            <person name="Rode C.K."/>
            <person name="Mayhew G.F."/>
            <person name="Gregor J."/>
            <person name="Davis N.W."/>
            <person name="Kirkpatrick H.A."/>
            <person name="Goeden M.A."/>
            <person name="Rose D.J."/>
            <person name="Mau B."/>
            <person name="Shao Y."/>
        </authorList>
    </citation>
    <scope>NUCLEOTIDE SEQUENCE [LARGE SCALE GENOMIC DNA]</scope>
    <source>
        <strain>K12 / MG1655 / ATCC 47076</strain>
    </source>
</reference>
<reference key="3">
    <citation type="journal article" date="2006" name="Mol. Syst. Biol.">
        <title>Highly accurate genome sequences of Escherichia coli K-12 strains MG1655 and W3110.</title>
        <authorList>
            <person name="Hayashi K."/>
            <person name="Morooka N."/>
            <person name="Yamamoto Y."/>
            <person name="Fujita K."/>
            <person name="Isono K."/>
            <person name="Choi S."/>
            <person name="Ohtsubo E."/>
            <person name="Baba T."/>
            <person name="Wanner B.L."/>
            <person name="Mori H."/>
            <person name="Horiuchi T."/>
        </authorList>
    </citation>
    <scope>NUCLEOTIDE SEQUENCE [LARGE SCALE GENOMIC DNA]</scope>
    <source>
        <strain>K12 / W3110 / ATCC 27325 / DSM 5911</strain>
    </source>
</reference>
<evidence type="ECO:0000250" key="1"/>
<evidence type="ECO:0000255" key="2">
    <source>
        <dbReference type="PROSITE-ProRule" id="PRU00307"/>
    </source>
</evidence>
<evidence type="ECO:0000305" key="3"/>
<organism>
    <name type="scientific">Escherichia coli (strain K12)</name>
    <dbReference type="NCBI Taxonomy" id="83333"/>
    <lineage>
        <taxon>Bacteria</taxon>
        <taxon>Pseudomonadati</taxon>
        <taxon>Pseudomonadota</taxon>
        <taxon>Gammaproteobacteria</taxon>
        <taxon>Enterobacterales</taxon>
        <taxon>Enterobacteriaceae</taxon>
        <taxon>Escherichia</taxon>
    </lineage>
</organism>
<proteinExistence type="inferred from homology"/>
<sequence>MKKYQQLAEQLREQIASGIWQPGDRLPSLRDQVALSGMSFMTVSHAYQLLESQGYIIARPQSGYYVAPQAIKMPKAPVIPVTRDEAVDINTYIFDMLQASRDPSVVPFASAFPDPRLFPLQQLNRSLAQVSKTATAMSVIENLPPGNAELRQAIARRYALQGITISPDEIVITAGALEALNLSLQAVTEPGDWVIVENPCFYGALQALERLRLKALSVATDVKEGIDLQALELALQEYPVKACWLMTNSQNPLGFTLTPQKKAQLVALLNQYNVTLIEDDVYSELYFGREKPLPAKAWDRHDGVLHCSSFSKCLVPGFRIGWVAAGKHARKIQRLQLMSTLSTSSPMQLALVDYLSTRRYDAHLRRLRRQLAERKQRAWQALLRYLPAEVKIHHNDSGYFLWLELPEPLDAGELSLAALTHHISIAPGKMFSTGENWSRFFRFNTAWQWGEREEQAVKQLGKLIQERL</sequence>
<feature type="chain" id="PRO_0000050708" description="Uncharacterized HTH-type transcriptional regulator YdcR">
    <location>
        <begin position="1"/>
        <end position="468"/>
    </location>
</feature>
<feature type="domain" description="HTH gntR-type" evidence="2">
    <location>
        <begin position="1"/>
        <end position="69"/>
    </location>
</feature>
<feature type="modified residue" description="N6-(pyridoxal phosphate)lysine" evidence="1">
    <location>
        <position position="312"/>
    </location>
</feature>
<dbReference type="EMBL" id="U00096">
    <property type="protein sequence ID" value="AAC74521.1"/>
    <property type="molecule type" value="Genomic_DNA"/>
</dbReference>
<dbReference type="EMBL" id="AP009048">
    <property type="protein sequence ID" value="BAA15069.1"/>
    <property type="molecule type" value="Genomic_DNA"/>
</dbReference>
<dbReference type="PIR" id="B64896">
    <property type="entry name" value="B64896"/>
</dbReference>
<dbReference type="RefSeq" id="NP_415956.1">
    <property type="nucleotide sequence ID" value="NC_000913.3"/>
</dbReference>
<dbReference type="RefSeq" id="WP_000760626.1">
    <property type="nucleotide sequence ID" value="NZ_SSZK01000021.1"/>
</dbReference>
<dbReference type="SMR" id="P77730"/>
<dbReference type="BioGRID" id="4260188">
    <property type="interactions" value="121"/>
</dbReference>
<dbReference type="DIP" id="DIP-28077N"/>
<dbReference type="FunCoup" id="P77730">
    <property type="interactions" value="401"/>
</dbReference>
<dbReference type="IntAct" id="P77730">
    <property type="interactions" value="3"/>
</dbReference>
<dbReference type="STRING" id="511145.b1439"/>
<dbReference type="jPOST" id="P77730"/>
<dbReference type="PaxDb" id="511145-b1439"/>
<dbReference type="EnsemblBacteria" id="AAC74521">
    <property type="protein sequence ID" value="AAC74521"/>
    <property type="gene ID" value="b1439"/>
</dbReference>
<dbReference type="GeneID" id="946004"/>
<dbReference type="KEGG" id="ecj:JW1434"/>
<dbReference type="KEGG" id="eco:b1439"/>
<dbReference type="KEGG" id="ecoc:C3026_08375"/>
<dbReference type="PATRIC" id="fig|1411691.4.peg.829"/>
<dbReference type="EchoBASE" id="EB3524"/>
<dbReference type="eggNOG" id="COG1167">
    <property type="taxonomic scope" value="Bacteria"/>
</dbReference>
<dbReference type="HOGENOM" id="CLU_017584_0_0_6"/>
<dbReference type="InParanoid" id="P77730"/>
<dbReference type="OMA" id="MPEQIMV"/>
<dbReference type="OrthoDB" id="9804020at2"/>
<dbReference type="PhylomeDB" id="P77730"/>
<dbReference type="BioCyc" id="EcoCyc:G6750-MONOMER"/>
<dbReference type="PRO" id="PR:P77730"/>
<dbReference type="Proteomes" id="UP000000625">
    <property type="component" value="Chromosome"/>
</dbReference>
<dbReference type="GO" id="GO:0003677">
    <property type="term" value="F:DNA binding"/>
    <property type="evidence" value="ECO:0007669"/>
    <property type="project" value="UniProtKB-KW"/>
</dbReference>
<dbReference type="GO" id="GO:0003700">
    <property type="term" value="F:DNA-binding transcription factor activity"/>
    <property type="evidence" value="ECO:0007669"/>
    <property type="project" value="InterPro"/>
</dbReference>
<dbReference type="GO" id="GO:0030170">
    <property type="term" value="F:pyridoxal phosphate binding"/>
    <property type="evidence" value="ECO:0007669"/>
    <property type="project" value="InterPro"/>
</dbReference>
<dbReference type="GO" id="GO:0008483">
    <property type="term" value="F:transaminase activity"/>
    <property type="evidence" value="ECO:0000318"/>
    <property type="project" value="GO_Central"/>
</dbReference>
<dbReference type="GO" id="GO:1901605">
    <property type="term" value="P:alpha-amino acid metabolic process"/>
    <property type="evidence" value="ECO:0000318"/>
    <property type="project" value="GO_Central"/>
</dbReference>
<dbReference type="GO" id="GO:0009058">
    <property type="term" value="P:biosynthetic process"/>
    <property type="evidence" value="ECO:0007669"/>
    <property type="project" value="InterPro"/>
</dbReference>
<dbReference type="CDD" id="cd00609">
    <property type="entry name" value="AAT_like"/>
    <property type="match status" value="1"/>
</dbReference>
<dbReference type="CDD" id="cd07377">
    <property type="entry name" value="WHTH_GntR"/>
    <property type="match status" value="1"/>
</dbReference>
<dbReference type="FunFam" id="1.10.10.10:FF:000320">
    <property type="entry name" value="GntR family transcriptional regulator"/>
    <property type="match status" value="1"/>
</dbReference>
<dbReference type="FunFam" id="3.40.640.10:FF:000023">
    <property type="entry name" value="Transcriptional regulator, GntR family"/>
    <property type="match status" value="1"/>
</dbReference>
<dbReference type="Gene3D" id="3.90.1150.10">
    <property type="entry name" value="Aspartate Aminotransferase, domain 1"/>
    <property type="match status" value="1"/>
</dbReference>
<dbReference type="Gene3D" id="3.40.640.10">
    <property type="entry name" value="Type I PLP-dependent aspartate aminotransferase-like (Major domain)"/>
    <property type="match status" value="1"/>
</dbReference>
<dbReference type="Gene3D" id="1.10.10.10">
    <property type="entry name" value="Winged helix-like DNA-binding domain superfamily/Winged helix DNA-binding domain"/>
    <property type="match status" value="1"/>
</dbReference>
<dbReference type="InterPro" id="IPR004839">
    <property type="entry name" value="Aminotransferase_I/II_large"/>
</dbReference>
<dbReference type="InterPro" id="IPR051446">
    <property type="entry name" value="HTH_trans_reg/aminotransferase"/>
</dbReference>
<dbReference type="InterPro" id="IPR015424">
    <property type="entry name" value="PyrdxlP-dep_Trfase"/>
</dbReference>
<dbReference type="InterPro" id="IPR015421">
    <property type="entry name" value="PyrdxlP-dep_Trfase_major"/>
</dbReference>
<dbReference type="InterPro" id="IPR015422">
    <property type="entry name" value="PyrdxlP-dep_Trfase_small"/>
</dbReference>
<dbReference type="InterPro" id="IPR000524">
    <property type="entry name" value="Tscrpt_reg_HTH_GntR"/>
</dbReference>
<dbReference type="InterPro" id="IPR036388">
    <property type="entry name" value="WH-like_DNA-bd_sf"/>
</dbReference>
<dbReference type="InterPro" id="IPR036390">
    <property type="entry name" value="WH_DNA-bd_sf"/>
</dbReference>
<dbReference type="PANTHER" id="PTHR46577">
    <property type="entry name" value="HTH-TYPE TRANSCRIPTIONAL REGULATORY PROTEIN GABR"/>
    <property type="match status" value="1"/>
</dbReference>
<dbReference type="PANTHER" id="PTHR46577:SF2">
    <property type="entry name" value="TRANSCRIPTIONAL REGULATORY PROTEIN"/>
    <property type="match status" value="1"/>
</dbReference>
<dbReference type="Pfam" id="PF00155">
    <property type="entry name" value="Aminotran_1_2"/>
    <property type="match status" value="1"/>
</dbReference>
<dbReference type="Pfam" id="PF00392">
    <property type="entry name" value="GntR"/>
    <property type="match status" value="1"/>
</dbReference>
<dbReference type="SMART" id="SM00345">
    <property type="entry name" value="HTH_GNTR"/>
    <property type="match status" value="1"/>
</dbReference>
<dbReference type="SUPFAM" id="SSF53383">
    <property type="entry name" value="PLP-dependent transferases"/>
    <property type="match status" value="1"/>
</dbReference>
<dbReference type="SUPFAM" id="SSF46785">
    <property type="entry name" value="Winged helix' DNA-binding domain"/>
    <property type="match status" value="1"/>
</dbReference>
<dbReference type="PROSITE" id="PS50949">
    <property type="entry name" value="HTH_GNTR"/>
    <property type="match status" value="1"/>
</dbReference>
<gene>
    <name type="primary">ydcR</name>
    <name type="ordered locus">b1439</name>
    <name type="ordered locus">JW1434</name>
</gene>
<keyword id="KW-0032">Aminotransferase</keyword>
<keyword id="KW-0238">DNA-binding</keyword>
<keyword id="KW-0663">Pyridoxal phosphate</keyword>
<keyword id="KW-1185">Reference proteome</keyword>
<keyword id="KW-0804">Transcription</keyword>
<keyword id="KW-0805">Transcription regulation</keyword>
<keyword id="KW-0808">Transferase</keyword>
<accession>P77730</accession>
<comment type="similarity">
    <text evidence="3">In the C-terminal section; belongs to the class-I pyridoxal-phosphate-dependent aminotransferase family.</text>
</comment>